<proteinExistence type="inferred from homology"/>
<keyword id="KW-0963">Cytoplasm</keyword>
<keyword id="KW-0378">Hydrolase</keyword>
<keyword id="KW-0479">Metal-binding</keyword>
<keyword id="KW-0482">Metalloprotease</keyword>
<keyword id="KW-0539">Nucleus</keyword>
<keyword id="KW-0645">Protease</keyword>
<keyword id="KW-1185">Reference proteome</keyword>
<feature type="chain" id="PRO_0000148997" description="Probable metalloprotease arx1">
    <location>
        <begin position="1"/>
        <end position="417"/>
    </location>
</feature>
<dbReference type="EC" id="3.-.-.-"/>
<dbReference type="EMBL" id="CU329671">
    <property type="protein sequence ID" value="CAA18873.1"/>
    <property type="molecule type" value="Genomic_DNA"/>
</dbReference>
<dbReference type="PIR" id="T39939">
    <property type="entry name" value="T39939"/>
</dbReference>
<dbReference type="RefSeq" id="NP_596605.1">
    <property type="nucleotide sequence ID" value="NM_001022526.2"/>
</dbReference>
<dbReference type="SMR" id="O60180"/>
<dbReference type="FunCoup" id="O60180">
    <property type="interactions" value="49"/>
</dbReference>
<dbReference type="STRING" id="284812.O60180"/>
<dbReference type="iPTMnet" id="O60180"/>
<dbReference type="PaxDb" id="4896-SPBC23E6.05.1"/>
<dbReference type="EnsemblFungi" id="SPBC23E6.05.1">
    <property type="protein sequence ID" value="SPBC23E6.05.1:pep"/>
    <property type="gene ID" value="SPBC23E6.05"/>
</dbReference>
<dbReference type="GeneID" id="2540457"/>
<dbReference type="KEGG" id="spo:2540457"/>
<dbReference type="PomBase" id="SPBC23E6.05">
    <property type="gene designation" value="arx1"/>
</dbReference>
<dbReference type="VEuPathDB" id="FungiDB:SPBC23E6.05"/>
<dbReference type="eggNOG" id="KOG2776">
    <property type="taxonomic scope" value="Eukaryota"/>
</dbReference>
<dbReference type="HOGENOM" id="CLU_659149_0_0_1"/>
<dbReference type="InParanoid" id="O60180"/>
<dbReference type="OMA" id="GMGPYIG"/>
<dbReference type="PhylomeDB" id="O60180"/>
<dbReference type="PRO" id="PR:O60180"/>
<dbReference type="Proteomes" id="UP000002485">
    <property type="component" value="Chromosome II"/>
</dbReference>
<dbReference type="GO" id="GO:0005829">
    <property type="term" value="C:cytosol"/>
    <property type="evidence" value="ECO:0007005"/>
    <property type="project" value="PomBase"/>
</dbReference>
<dbReference type="GO" id="GO:0005635">
    <property type="term" value="C:nuclear envelope"/>
    <property type="evidence" value="ECO:0007005"/>
    <property type="project" value="PomBase"/>
</dbReference>
<dbReference type="GO" id="GO:0005634">
    <property type="term" value="C:nucleus"/>
    <property type="evidence" value="ECO:0007005"/>
    <property type="project" value="PomBase"/>
</dbReference>
<dbReference type="GO" id="GO:0046872">
    <property type="term" value="F:metal ion binding"/>
    <property type="evidence" value="ECO:0007669"/>
    <property type="project" value="UniProtKB-KW"/>
</dbReference>
<dbReference type="GO" id="GO:0008237">
    <property type="term" value="F:metallopeptidase activity"/>
    <property type="evidence" value="ECO:0000255"/>
    <property type="project" value="PomBase"/>
</dbReference>
<dbReference type="GO" id="GO:0006508">
    <property type="term" value="P:proteolysis"/>
    <property type="evidence" value="ECO:0007669"/>
    <property type="project" value="UniProtKB-KW"/>
</dbReference>
<dbReference type="GO" id="GO:0042273">
    <property type="term" value="P:ribosomal large subunit biogenesis"/>
    <property type="evidence" value="ECO:0000266"/>
    <property type="project" value="PomBase"/>
</dbReference>
<dbReference type="CDD" id="cd01089">
    <property type="entry name" value="PA2G4-like"/>
    <property type="match status" value="1"/>
</dbReference>
<dbReference type="Gene3D" id="3.90.230.10">
    <property type="entry name" value="Creatinase/methionine aminopeptidase superfamily"/>
    <property type="match status" value="1"/>
</dbReference>
<dbReference type="Gene3D" id="1.10.10.10">
    <property type="entry name" value="Winged helix-like DNA-binding domain superfamily/Winged helix DNA-binding domain"/>
    <property type="match status" value="1"/>
</dbReference>
<dbReference type="InterPro" id="IPR036005">
    <property type="entry name" value="Creatinase/aminopeptidase-like"/>
</dbReference>
<dbReference type="InterPro" id="IPR047113">
    <property type="entry name" value="PA2G4/ARX1"/>
</dbReference>
<dbReference type="InterPro" id="IPR000994">
    <property type="entry name" value="Pept_M24"/>
</dbReference>
<dbReference type="InterPro" id="IPR036388">
    <property type="entry name" value="WH-like_DNA-bd_sf"/>
</dbReference>
<dbReference type="InterPro" id="IPR036390">
    <property type="entry name" value="WH_DNA-bd_sf"/>
</dbReference>
<dbReference type="PANTHER" id="PTHR10804:SF102">
    <property type="entry name" value="METALLOPROTEASE ARX1-RELATED"/>
    <property type="match status" value="1"/>
</dbReference>
<dbReference type="PANTHER" id="PTHR10804">
    <property type="entry name" value="PROTEASE FAMILY M24 METHIONYL AMINOPEPTIDASE, AMINOPEPTIDASE P"/>
    <property type="match status" value="1"/>
</dbReference>
<dbReference type="Pfam" id="PF00557">
    <property type="entry name" value="Peptidase_M24"/>
    <property type="match status" value="1"/>
</dbReference>
<dbReference type="SUPFAM" id="SSF55920">
    <property type="entry name" value="Creatinase/aminopeptidase"/>
    <property type="match status" value="1"/>
</dbReference>
<dbReference type="SUPFAM" id="SSF46785">
    <property type="entry name" value="Winged helix' DNA-binding domain"/>
    <property type="match status" value="1"/>
</dbReference>
<gene>
    <name type="primary">arx1</name>
    <name type="ORF">SPBC23E6.05</name>
</gene>
<protein>
    <recommendedName>
        <fullName>Probable metalloprotease arx1</fullName>
        <ecNumber>3.-.-.-</ecNumber>
    </recommendedName>
    <alternativeName>
        <fullName>Associated with ribosomal export complex protein 1</fullName>
    </alternativeName>
</protein>
<organism>
    <name type="scientific">Schizosaccharomyces pombe (strain 972 / ATCC 24843)</name>
    <name type="common">Fission yeast</name>
    <dbReference type="NCBI Taxonomy" id="284812"/>
    <lineage>
        <taxon>Eukaryota</taxon>
        <taxon>Fungi</taxon>
        <taxon>Dikarya</taxon>
        <taxon>Ascomycota</taxon>
        <taxon>Taphrinomycotina</taxon>
        <taxon>Schizosaccharomycetes</taxon>
        <taxon>Schizosaccharomycetales</taxon>
        <taxon>Schizosaccharomycetaceae</taxon>
        <taxon>Schizosaccharomyces</taxon>
    </lineage>
</organism>
<comment type="function">
    <text evidence="1">Probable metalloprotease involved in proper assembly of pre-ribosomal particles during the biogenesis of the 60S ribosomal subunit. Accompanies the pre-60S particles to the cytoplasm (By similarity).</text>
</comment>
<comment type="subunit">
    <text evidence="1">Component of the nucleoplasmic and cytoplasmic pre-60S ribosomal particles.</text>
</comment>
<comment type="subcellular location">
    <subcellularLocation>
        <location evidence="1">Cytoplasm</location>
    </subcellularLocation>
    <subcellularLocation>
        <location evidence="1">Nucleus</location>
    </subcellularLocation>
</comment>
<comment type="similarity">
    <text evidence="2">Belongs to the peptidase M24 family.</text>
</comment>
<reference key="1">
    <citation type="journal article" date="2002" name="Nature">
        <title>The genome sequence of Schizosaccharomyces pombe.</title>
        <authorList>
            <person name="Wood V."/>
            <person name="Gwilliam R."/>
            <person name="Rajandream M.A."/>
            <person name="Lyne M.H."/>
            <person name="Lyne R."/>
            <person name="Stewart A."/>
            <person name="Sgouros J.G."/>
            <person name="Peat N."/>
            <person name="Hayles J."/>
            <person name="Baker S.G."/>
            <person name="Basham D."/>
            <person name="Bowman S."/>
            <person name="Brooks K."/>
            <person name="Brown D."/>
            <person name="Brown S."/>
            <person name="Chillingworth T."/>
            <person name="Churcher C.M."/>
            <person name="Collins M."/>
            <person name="Connor R."/>
            <person name="Cronin A."/>
            <person name="Davis P."/>
            <person name="Feltwell T."/>
            <person name="Fraser A."/>
            <person name="Gentles S."/>
            <person name="Goble A."/>
            <person name="Hamlin N."/>
            <person name="Harris D.E."/>
            <person name="Hidalgo J."/>
            <person name="Hodgson G."/>
            <person name="Holroyd S."/>
            <person name="Hornsby T."/>
            <person name="Howarth S."/>
            <person name="Huckle E.J."/>
            <person name="Hunt S."/>
            <person name="Jagels K."/>
            <person name="James K.D."/>
            <person name="Jones L."/>
            <person name="Jones M."/>
            <person name="Leather S."/>
            <person name="McDonald S."/>
            <person name="McLean J."/>
            <person name="Mooney P."/>
            <person name="Moule S."/>
            <person name="Mungall K.L."/>
            <person name="Murphy L.D."/>
            <person name="Niblett D."/>
            <person name="Odell C."/>
            <person name="Oliver K."/>
            <person name="O'Neil S."/>
            <person name="Pearson D."/>
            <person name="Quail M.A."/>
            <person name="Rabbinowitsch E."/>
            <person name="Rutherford K.M."/>
            <person name="Rutter S."/>
            <person name="Saunders D."/>
            <person name="Seeger K."/>
            <person name="Sharp S."/>
            <person name="Skelton J."/>
            <person name="Simmonds M.N."/>
            <person name="Squares R."/>
            <person name="Squares S."/>
            <person name="Stevens K."/>
            <person name="Taylor K."/>
            <person name="Taylor R.G."/>
            <person name="Tivey A."/>
            <person name="Walsh S.V."/>
            <person name="Warren T."/>
            <person name="Whitehead S."/>
            <person name="Woodward J.R."/>
            <person name="Volckaert G."/>
            <person name="Aert R."/>
            <person name="Robben J."/>
            <person name="Grymonprez B."/>
            <person name="Weltjens I."/>
            <person name="Vanstreels E."/>
            <person name="Rieger M."/>
            <person name="Schaefer M."/>
            <person name="Mueller-Auer S."/>
            <person name="Gabel C."/>
            <person name="Fuchs M."/>
            <person name="Duesterhoeft A."/>
            <person name="Fritzc C."/>
            <person name="Holzer E."/>
            <person name="Moestl D."/>
            <person name="Hilbert H."/>
            <person name="Borzym K."/>
            <person name="Langer I."/>
            <person name="Beck A."/>
            <person name="Lehrach H."/>
            <person name="Reinhardt R."/>
            <person name="Pohl T.M."/>
            <person name="Eger P."/>
            <person name="Zimmermann W."/>
            <person name="Wedler H."/>
            <person name="Wambutt R."/>
            <person name="Purnelle B."/>
            <person name="Goffeau A."/>
            <person name="Cadieu E."/>
            <person name="Dreano S."/>
            <person name="Gloux S."/>
            <person name="Lelaure V."/>
            <person name="Mottier S."/>
            <person name="Galibert F."/>
            <person name="Aves S.J."/>
            <person name="Xiang Z."/>
            <person name="Hunt C."/>
            <person name="Moore K."/>
            <person name="Hurst S.M."/>
            <person name="Lucas M."/>
            <person name="Rochet M."/>
            <person name="Gaillardin C."/>
            <person name="Tallada V.A."/>
            <person name="Garzon A."/>
            <person name="Thode G."/>
            <person name="Daga R.R."/>
            <person name="Cruzado L."/>
            <person name="Jimenez J."/>
            <person name="Sanchez M."/>
            <person name="del Rey F."/>
            <person name="Benito J."/>
            <person name="Dominguez A."/>
            <person name="Revuelta J.L."/>
            <person name="Moreno S."/>
            <person name="Armstrong J."/>
            <person name="Forsburg S.L."/>
            <person name="Cerutti L."/>
            <person name="Lowe T."/>
            <person name="McCombie W.R."/>
            <person name="Paulsen I."/>
            <person name="Potashkin J."/>
            <person name="Shpakovski G.V."/>
            <person name="Ussery D."/>
            <person name="Barrell B.G."/>
            <person name="Nurse P."/>
        </authorList>
    </citation>
    <scope>NUCLEOTIDE SEQUENCE [LARGE SCALE GENOMIC DNA]</scope>
    <source>
        <strain>972 / ATCC 24843</strain>
    </source>
</reference>
<name>ARX1_SCHPO</name>
<accession>O60180</accession>
<sequence length="417" mass="45673">MELDPSDSNSRVVDASQFSKYRDAGALVSKAFHQVASRCVPGASTREISSYGDNLLHEYKSSIYKSQRFEKGIAEPTSICVNNCAYNYAPGPESVIAGNDNSYHLQVGDVTKISMGLHFDGYTALISHTIVVTPPPQPGMGPYIGPGADAICAAHYASKAVANLLATNNSDDPITGSRLRKIVDDIASQFRVSVCPGSRIRRISRFLVGQPTIDRLEEDQNTKHAVEWPAPEEETRKADVTNSLDPANVLSTELNTWHVMPKEAWLIDISMSSQPISSLKEHPDLKPTLYIHDVNVSYMLKLKASRSLLSEIKKEKSVFPFHFGSLSSERNLLGLRELTDRHILVPMPVLISSPSNVIAREELTVITQPNPSSDLLCLTVPTPPSYVKSDFSLEDGTDAALICEGINVNIKSININV</sequence>
<evidence type="ECO:0000250" key="1"/>
<evidence type="ECO:0000305" key="2"/>